<keyword id="KW-0150">Chloroplast</keyword>
<keyword id="KW-0934">Plastid</keyword>
<keyword id="KW-0687">Ribonucleoprotein</keyword>
<keyword id="KW-0689">Ribosomal protein</keyword>
<organism>
    <name type="scientific">Haptolina hirta</name>
    <name type="common">Plankton alga</name>
    <name type="synonym">Chrysochromulina hirta</name>
    <dbReference type="NCBI Taxonomy" id="35142"/>
    <lineage>
        <taxon>Eukaryota</taxon>
        <taxon>Haptista</taxon>
        <taxon>Haptophyta</taxon>
        <taxon>Prymnesiophyceae</taxon>
        <taxon>Prymnesiales</taxon>
        <taxon>Prymnesiaceae</taxon>
        <taxon>Haptolina</taxon>
    </lineage>
</organism>
<name>RK27_HAPHI</name>
<evidence type="ECO:0000305" key="1"/>
<geneLocation type="chloroplast"/>
<dbReference type="EMBL" id="D26099">
    <property type="protein sequence ID" value="BAA18907.1"/>
    <property type="molecule type" value="Genomic_DNA"/>
</dbReference>
<dbReference type="SMR" id="P41550"/>
<dbReference type="GO" id="GO:0009507">
    <property type="term" value="C:chloroplast"/>
    <property type="evidence" value="ECO:0007669"/>
    <property type="project" value="UniProtKB-SubCell"/>
</dbReference>
<dbReference type="GO" id="GO:1990904">
    <property type="term" value="C:ribonucleoprotein complex"/>
    <property type="evidence" value="ECO:0007669"/>
    <property type="project" value="UniProtKB-KW"/>
</dbReference>
<dbReference type="GO" id="GO:0005840">
    <property type="term" value="C:ribosome"/>
    <property type="evidence" value="ECO:0007669"/>
    <property type="project" value="UniProtKB-KW"/>
</dbReference>
<dbReference type="GO" id="GO:0003735">
    <property type="term" value="F:structural constituent of ribosome"/>
    <property type="evidence" value="ECO:0007669"/>
    <property type="project" value="InterPro"/>
</dbReference>
<dbReference type="GO" id="GO:0006412">
    <property type="term" value="P:translation"/>
    <property type="evidence" value="ECO:0007669"/>
    <property type="project" value="InterPro"/>
</dbReference>
<dbReference type="FunFam" id="2.40.50.100:FF:000060">
    <property type="entry name" value="Apicoplast ribosomal protein L27"/>
    <property type="match status" value="1"/>
</dbReference>
<dbReference type="Gene3D" id="2.40.50.100">
    <property type="match status" value="1"/>
</dbReference>
<dbReference type="InterPro" id="IPR001684">
    <property type="entry name" value="Ribosomal_bL27"/>
</dbReference>
<dbReference type="InterPro" id="IPR018261">
    <property type="entry name" value="Ribosomal_bL27_CS"/>
</dbReference>
<dbReference type="PANTHER" id="PTHR15893:SF0">
    <property type="entry name" value="LARGE RIBOSOMAL SUBUNIT PROTEIN BL27M"/>
    <property type="match status" value="1"/>
</dbReference>
<dbReference type="PANTHER" id="PTHR15893">
    <property type="entry name" value="RIBOSOMAL PROTEIN L27"/>
    <property type="match status" value="1"/>
</dbReference>
<dbReference type="Pfam" id="PF01016">
    <property type="entry name" value="Ribosomal_L27"/>
    <property type="match status" value="1"/>
</dbReference>
<dbReference type="PRINTS" id="PR00063">
    <property type="entry name" value="RIBOSOMALL27"/>
</dbReference>
<dbReference type="SUPFAM" id="SSF110324">
    <property type="entry name" value="Ribosomal L27 protein-like"/>
    <property type="match status" value="1"/>
</dbReference>
<dbReference type="PROSITE" id="PS00831">
    <property type="entry name" value="RIBOSOMAL_L27"/>
    <property type="match status" value="1"/>
</dbReference>
<gene>
    <name type="primary">rpl27</name>
</gene>
<sequence length="73" mass="8038">STKNGRDSNSQRLGVKVYGNQPVKAGGIVVRQRGLTFKPGNSMKVGKDYTLFSCKDGIVQFETNGKTKFVHVY</sequence>
<feature type="chain" id="PRO_0000181218" description="Large ribosomal subunit protein bL27c">
    <location>
        <begin position="1" status="less than"/>
        <end position="73"/>
    </location>
</feature>
<feature type="non-terminal residue">
    <location>
        <position position="1"/>
    </location>
</feature>
<comment type="subcellular location">
    <subcellularLocation>
        <location>Plastid</location>
        <location>Chloroplast</location>
    </subcellularLocation>
</comment>
<comment type="similarity">
    <text evidence="1">Belongs to the bacterial ribosomal protein bL27 family.</text>
</comment>
<accession>P41550</accession>
<protein>
    <recommendedName>
        <fullName evidence="1">Large ribosomal subunit protein bL27c</fullName>
    </recommendedName>
    <alternativeName>
        <fullName>50S ribosomal protein L27, chloroplastic</fullName>
    </alternativeName>
</protein>
<reference key="1">
    <citation type="journal article" date="1994" name="Plant Mol. Biol.">
        <title>The gene for ribosomal protein L27 is located on the plastid rather than the nuclear genome of the chlorophyll c-containing alga Pleurochrysis carterae.</title>
        <authorList>
            <person name="Fujiwara S."/>
            <person name="Kawachi M."/>
            <person name="Inouye I."/>
            <person name="Someya J."/>
        </authorList>
    </citation>
    <scope>NUCLEOTIDE SEQUENCE [GENOMIC DNA]</scope>
</reference>
<proteinExistence type="inferred from homology"/>